<name>SYP_METNO</name>
<accession>B8IUW4</accession>
<reference key="1">
    <citation type="submission" date="2009-01" db="EMBL/GenBank/DDBJ databases">
        <title>Complete sequence of chromosome of Methylobacterium nodulans ORS 2060.</title>
        <authorList>
            <consortium name="US DOE Joint Genome Institute"/>
            <person name="Lucas S."/>
            <person name="Copeland A."/>
            <person name="Lapidus A."/>
            <person name="Glavina del Rio T."/>
            <person name="Dalin E."/>
            <person name="Tice H."/>
            <person name="Bruce D."/>
            <person name="Goodwin L."/>
            <person name="Pitluck S."/>
            <person name="Sims D."/>
            <person name="Brettin T."/>
            <person name="Detter J.C."/>
            <person name="Han C."/>
            <person name="Larimer F."/>
            <person name="Land M."/>
            <person name="Hauser L."/>
            <person name="Kyrpides N."/>
            <person name="Ivanova N."/>
            <person name="Marx C.J."/>
            <person name="Richardson P."/>
        </authorList>
    </citation>
    <scope>NUCLEOTIDE SEQUENCE [LARGE SCALE GENOMIC DNA]</scope>
    <source>
        <strain>LMG 21967 / CNCM I-2342 / ORS 2060</strain>
    </source>
</reference>
<keyword id="KW-0030">Aminoacyl-tRNA synthetase</keyword>
<keyword id="KW-0067">ATP-binding</keyword>
<keyword id="KW-0963">Cytoplasm</keyword>
<keyword id="KW-0436">Ligase</keyword>
<keyword id="KW-0547">Nucleotide-binding</keyword>
<keyword id="KW-0648">Protein biosynthesis</keyword>
<keyword id="KW-1185">Reference proteome</keyword>
<gene>
    <name evidence="1" type="primary">proS</name>
    <name type="ordered locus">Mnod_4144</name>
</gene>
<sequence length="443" mass="49481">MRLSRYFLPILRETPKEAEIVSHRLMLRAGMIRQEAAGIYAWLPLGLRVLNRVTEVIRAEQDRSGAIELLMPTIQSAELWRESGRYEAYGKEMLRIRDRHEREMLFGPTNEEMITAIFRSAVRSYKDLPKNLYHIQWKFRDEVRPRFGTMRSREFLMKDAYSFDLDEAGARHAYNKMFVAYLRTFARLGLKAIPMRAETGPIGGNLSHEFIILAQTGESEVFCDRAYLGFPIPPASIDFDDVAALQATVDHWTSRYAATSEMHEPAAFEAVPEEARMAARGIEVGHIFYFGTKYSEPMGARVTGPDGQERPVHMGSYGIGPSRLVAAIIEASHDEAGIVWPDSVAPFDVALLNLKVGDAATDAACAKLQEELEAAGLTVLTDDRDERPGAKFATADLIGLPWQVIVGPKGLAEGTIELKRRATGEREIVAVDAVAPRLRGAKE</sequence>
<comment type="function">
    <text evidence="1">Catalyzes the attachment of proline to tRNA(Pro) in a two-step reaction: proline is first activated by ATP to form Pro-AMP and then transferred to the acceptor end of tRNA(Pro).</text>
</comment>
<comment type="catalytic activity">
    <reaction evidence="1">
        <text>tRNA(Pro) + L-proline + ATP = L-prolyl-tRNA(Pro) + AMP + diphosphate</text>
        <dbReference type="Rhea" id="RHEA:14305"/>
        <dbReference type="Rhea" id="RHEA-COMP:9700"/>
        <dbReference type="Rhea" id="RHEA-COMP:9702"/>
        <dbReference type="ChEBI" id="CHEBI:30616"/>
        <dbReference type="ChEBI" id="CHEBI:33019"/>
        <dbReference type="ChEBI" id="CHEBI:60039"/>
        <dbReference type="ChEBI" id="CHEBI:78442"/>
        <dbReference type="ChEBI" id="CHEBI:78532"/>
        <dbReference type="ChEBI" id="CHEBI:456215"/>
        <dbReference type="EC" id="6.1.1.15"/>
    </reaction>
</comment>
<comment type="subunit">
    <text evidence="1">Homodimer.</text>
</comment>
<comment type="subcellular location">
    <subcellularLocation>
        <location evidence="1">Cytoplasm</location>
    </subcellularLocation>
</comment>
<comment type="similarity">
    <text evidence="1">Belongs to the class-II aminoacyl-tRNA synthetase family. ProS type 2 subfamily.</text>
</comment>
<dbReference type="EC" id="6.1.1.15" evidence="1"/>
<dbReference type="EMBL" id="CP001349">
    <property type="protein sequence ID" value="ACL59022.1"/>
    <property type="molecule type" value="Genomic_DNA"/>
</dbReference>
<dbReference type="RefSeq" id="WP_015930671.1">
    <property type="nucleotide sequence ID" value="NC_011894.1"/>
</dbReference>
<dbReference type="SMR" id="B8IUW4"/>
<dbReference type="STRING" id="460265.Mnod_4144"/>
<dbReference type="KEGG" id="mno:Mnod_4144"/>
<dbReference type="eggNOG" id="COG0442">
    <property type="taxonomic scope" value="Bacteria"/>
</dbReference>
<dbReference type="HOGENOM" id="CLU_016739_4_2_5"/>
<dbReference type="OrthoDB" id="9809052at2"/>
<dbReference type="Proteomes" id="UP000008207">
    <property type="component" value="Chromosome"/>
</dbReference>
<dbReference type="GO" id="GO:0005829">
    <property type="term" value="C:cytosol"/>
    <property type="evidence" value="ECO:0007669"/>
    <property type="project" value="TreeGrafter"/>
</dbReference>
<dbReference type="GO" id="GO:0005524">
    <property type="term" value="F:ATP binding"/>
    <property type="evidence" value="ECO:0007669"/>
    <property type="project" value="UniProtKB-UniRule"/>
</dbReference>
<dbReference type="GO" id="GO:0004827">
    <property type="term" value="F:proline-tRNA ligase activity"/>
    <property type="evidence" value="ECO:0007669"/>
    <property type="project" value="UniProtKB-UniRule"/>
</dbReference>
<dbReference type="GO" id="GO:0006433">
    <property type="term" value="P:prolyl-tRNA aminoacylation"/>
    <property type="evidence" value="ECO:0007669"/>
    <property type="project" value="UniProtKB-UniRule"/>
</dbReference>
<dbReference type="CDD" id="cd00861">
    <property type="entry name" value="ProRS_anticodon_short"/>
    <property type="match status" value="1"/>
</dbReference>
<dbReference type="CDD" id="cd00779">
    <property type="entry name" value="ProRS_core_prok"/>
    <property type="match status" value="1"/>
</dbReference>
<dbReference type="FunFam" id="3.30.930.10:FF:000042">
    <property type="entry name" value="probable proline--tRNA ligase, mitochondrial"/>
    <property type="match status" value="1"/>
</dbReference>
<dbReference type="FunFam" id="3.40.50.800:FF:000032">
    <property type="entry name" value="Proline--tRNA ligase"/>
    <property type="match status" value="1"/>
</dbReference>
<dbReference type="Gene3D" id="3.40.50.800">
    <property type="entry name" value="Anticodon-binding domain"/>
    <property type="match status" value="1"/>
</dbReference>
<dbReference type="Gene3D" id="3.30.930.10">
    <property type="entry name" value="Bira Bifunctional Protein, Domain 2"/>
    <property type="match status" value="1"/>
</dbReference>
<dbReference type="HAMAP" id="MF_01570">
    <property type="entry name" value="Pro_tRNA_synth_type2"/>
    <property type="match status" value="1"/>
</dbReference>
<dbReference type="InterPro" id="IPR002314">
    <property type="entry name" value="aa-tRNA-synt_IIb"/>
</dbReference>
<dbReference type="InterPro" id="IPR006195">
    <property type="entry name" value="aa-tRNA-synth_II"/>
</dbReference>
<dbReference type="InterPro" id="IPR045864">
    <property type="entry name" value="aa-tRNA-synth_II/BPL/LPL"/>
</dbReference>
<dbReference type="InterPro" id="IPR004154">
    <property type="entry name" value="Anticodon-bd"/>
</dbReference>
<dbReference type="InterPro" id="IPR036621">
    <property type="entry name" value="Anticodon-bd_dom_sf"/>
</dbReference>
<dbReference type="InterPro" id="IPR002316">
    <property type="entry name" value="Pro-tRNA-ligase_IIa"/>
</dbReference>
<dbReference type="InterPro" id="IPR004500">
    <property type="entry name" value="Pro-tRNA-synth_IIa_bac-type"/>
</dbReference>
<dbReference type="InterPro" id="IPR050062">
    <property type="entry name" value="Pro-tRNA_synthetase"/>
</dbReference>
<dbReference type="InterPro" id="IPR023716">
    <property type="entry name" value="Prolyl-tRNA_ligase_IIa_type2"/>
</dbReference>
<dbReference type="InterPro" id="IPR044140">
    <property type="entry name" value="ProRS_anticodon_short"/>
</dbReference>
<dbReference type="InterPro" id="IPR033730">
    <property type="entry name" value="ProRS_core_prok"/>
</dbReference>
<dbReference type="NCBIfam" id="NF008979">
    <property type="entry name" value="PRK12325.1"/>
    <property type="match status" value="1"/>
</dbReference>
<dbReference type="NCBIfam" id="TIGR00409">
    <property type="entry name" value="proS_fam_II"/>
    <property type="match status" value="1"/>
</dbReference>
<dbReference type="PANTHER" id="PTHR42753">
    <property type="entry name" value="MITOCHONDRIAL RIBOSOME PROTEIN L39/PROLYL-TRNA LIGASE FAMILY MEMBER"/>
    <property type="match status" value="1"/>
</dbReference>
<dbReference type="PANTHER" id="PTHR42753:SF2">
    <property type="entry name" value="PROLINE--TRNA LIGASE"/>
    <property type="match status" value="1"/>
</dbReference>
<dbReference type="Pfam" id="PF03129">
    <property type="entry name" value="HGTP_anticodon"/>
    <property type="match status" value="1"/>
</dbReference>
<dbReference type="Pfam" id="PF00587">
    <property type="entry name" value="tRNA-synt_2b"/>
    <property type="match status" value="1"/>
</dbReference>
<dbReference type="PRINTS" id="PR01046">
    <property type="entry name" value="TRNASYNTHPRO"/>
</dbReference>
<dbReference type="SUPFAM" id="SSF52954">
    <property type="entry name" value="Class II aaRS ABD-related"/>
    <property type="match status" value="1"/>
</dbReference>
<dbReference type="SUPFAM" id="SSF55681">
    <property type="entry name" value="Class II aaRS and biotin synthetases"/>
    <property type="match status" value="1"/>
</dbReference>
<dbReference type="PROSITE" id="PS50862">
    <property type="entry name" value="AA_TRNA_LIGASE_II"/>
    <property type="match status" value="1"/>
</dbReference>
<evidence type="ECO:0000255" key="1">
    <source>
        <dbReference type="HAMAP-Rule" id="MF_01570"/>
    </source>
</evidence>
<proteinExistence type="inferred from homology"/>
<feature type="chain" id="PRO_1000185526" description="Proline--tRNA ligase">
    <location>
        <begin position="1"/>
        <end position="443"/>
    </location>
</feature>
<protein>
    <recommendedName>
        <fullName evidence="1">Proline--tRNA ligase</fullName>
        <ecNumber evidence="1">6.1.1.15</ecNumber>
    </recommendedName>
    <alternativeName>
        <fullName evidence="1">Prolyl-tRNA synthetase</fullName>
        <shortName evidence="1">ProRS</shortName>
    </alternativeName>
</protein>
<organism>
    <name type="scientific">Methylobacterium nodulans (strain LMG 21967 / CNCM I-2342 / ORS 2060)</name>
    <dbReference type="NCBI Taxonomy" id="460265"/>
    <lineage>
        <taxon>Bacteria</taxon>
        <taxon>Pseudomonadati</taxon>
        <taxon>Pseudomonadota</taxon>
        <taxon>Alphaproteobacteria</taxon>
        <taxon>Hyphomicrobiales</taxon>
        <taxon>Methylobacteriaceae</taxon>
        <taxon>Methylobacterium</taxon>
    </lineage>
</organism>